<reference key="1">
    <citation type="submission" date="2007-11" db="EMBL/GenBank/DDBJ databases">
        <authorList>
            <consortium name="The Salmonella enterica serovar Paratyphi B Genome Sequencing Project"/>
            <person name="McClelland M."/>
            <person name="Sanderson E.K."/>
            <person name="Porwollik S."/>
            <person name="Spieth J."/>
            <person name="Clifton W.S."/>
            <person name="Fulton R."/>
            <person name="Cordes M."/>
            <person name="Wollam A."/>
            <person name="Shah N."/>
            <person name="Pepin K."/>
            <person name="Bhonagiri V."/>
            <person name="Nash W."/>
            <person name="Johnson M."/>
            <person name="Thiruvilangam P."/>
            <person name="Wilson R."/>
        </authorList>
    </citation>
    <scope>NUCLEOTIDE SEQUENCE [LARGE SCALE GENOMIC DNA]</scope>
    <source>
        <strain>ATCC BAA-1250 / SPB7</strain>
    </source>
</reference>
<proteinExistence type="inferred from homology"/>
<organism>
    <name type="scientific">Salmonella paratyphi B (strain ATCC BAA-1250 / SPB7)</name>
    <dbReference type="NCBI Taxonomy" id="1016998"/>
    <lineage>
        <taxon>Bacteria</taxon>
        <taxon>Pseudomonadati</taxon>
        <taxon>Pseudomonadota</taxon>
        <taxon>Gammaproteobacteria</taxon>
        <taxon>Enterobacterales</taxon>
        <taxon>Enterobacteriaceae</taxon>
        <taxon>Salmonella</taxon>
    </lineage>
</organism>
<comment type="subcellular location">
    <subcellularLocation>
        <location evidence="1">Cell inner membrane</location>
        <topology evidence="1">Multi-pass membrane protein</topology>
    </subcellularLocation>
</comment>
<comment type="similarity">
    <text evidence="1">Belongs to the major facilitator superfamily. DHA1 family. MdtG (TC 2.A.1.2.20) subfamily.</text>
</comment>
<gene>
    <name evidence="1" type="primary">mdtG</name>
    <name type="ordered locus">SPAB_02377</name>
</gene>
<dbReference type="EMBL" id="CP000886">
    <property type="protein sequence ID" value="ABX67759.1"/>
    <property type="molecule type" value="Genomic_DNA"/>
</dbReference>
<dbReference type="RefSeq" id="WP_000075053.1">
    <property type="nucleotide sequence ID" value="NC_010102.1"/>
</dbReference>
<dbReference type="SMR" id="A9N5Q9"/>
<dbReference type="KEGG" id="spq:SPAB_02377"/>
<dbReference type="PATRIC" id="fig|1016998.12.peg.2249"/>
<dbReference type="HOGENOM" id="CLU_001265_57_3_6"/>
<dbReference type="BioCyc" id="SENT1016998:SPAB_RS09685-MONOMER"/>
<dbReference type="Proteomes" id="UP000008556">
    <property type="component" value="Chromosome"/>
</dbReference>
<dbReference type="GO" id="GO:0005886">
    <property type="term" value="C:plasma membrane"/>
    <property type="evidence" value="ECO:0007669"/>
    <property type="project" value="UniProtKB-SubCell"/>
</dbReference>
<dbReference type="GO" id="GO:0022857">
    <property type="term" value="F:transmembrane transporter activity"/>
    <property type="evidence" value="ECO:0007669"/>
    <property type="project" value="UniProtKB-UniRule"/>
</dbReference>
<dbReference type="CDD" id="cd17391">
    <property type="entry name" value="MFS_MdtG_MDR_like"/>
    <property type="match status" value="1"/>
</dbReference>
<dbReference type="FunFam" id="1.20.1250.20:FF:000020">
    <property type="entry name" value="Multidrug resistance protein MdtG"/>
    <property type="match status" value="1"/>
</dbReference>
<dbReference type="FunFam" id="1.20.1250.20:FF:000022">
    <property type="entry name" value="Multidrug resistance protein MdtG"/>
    <property type="match status" value="1"/>
</dbReference>
<dbReference type="Gene3D" id="1.20.1250.20">
    <property type="entry name" value="MFS general substrate transporter like domains"/>
    <property type="match status" value="2"/>
</dbReference>
<dbReference type="HAMAP" id="MF_01528">
    <property type="entry name" value="MFS_MdtG"/>
    <property type="match status" value="1"/>
</dbReference>
<dbReference type="InterPro" id="IPR011701">
    <property type="entry name" value="MFS"/>
</dbReference>
<dbReference type="InterPro" id="IPR020846">
    <property type="entry name" value="MFS_dom"/>
</dbReference>
<dbReference type="InterPro" id="IPR050497">
    <property type="entry name" value="MFS_MdtG_subfamily"/>
</dbReference>
<dbReference type="InterPro" id="IPR005828">
    <property type="entry name" value="MFS_sugar_transport-like"/>
</dbReference>
<dbReference type="InterPro" id="IPR036259">
    <property type="entry name" value="MFS_trans_sf"/>
</dbReference>
<dbReference type="InterPro" id="IPR023692">
    <property type="entry name" value="Mutidrug-R_MdtG"/>
</dbReference>
<dbReference type="InterPro" id="IPR001958">
    <property type="entry name" value="Tet-R_TetA/multi-R_MdtG-like"/>
</dbReference>
<dbReference type="NCBIfam" id="NF007372">
    <property type="entry name" value="PRK09874.1"/>
    <property type="match status" value="1"/>
</dbReference>
<dbReference type="PANTHER" id="PTHR43414">
    <property type="entry name" value="MULTIDRUG RESISTANCE PROTEIN MDTG"/>
    <property type="match status" value="1"/>
</dbReference>
<dbReference type="PANTHER" id="PTHR43414:SF6">
    <property type="entry name" value="MULTIDRUG RESISTANCE PROTEIN MDTG"/>
    <property type="match status" value="1"/>
</dbReference>
<dbReference type="Pfam" id="PF07690">
    <property type="entry name" value="MFS_1"/>
    <property type="match status" value="1"/>
</dbReference>
<dbReference type="Pfam" id="PF00083">
    <property type="entry name" value="Sugar_tr"/>
    <property type="match status" value="1"/>
</dbReference>
<dbReference type="PRINTS" id="PR01035">
    <property type="entry name" value="TCRTETA"/>
</dbReference>
<dbReference type="SUPFAM" id="SSF103473">
    <property type="entry name" value="MFS general substrate transporter"/>
    <property type="match status" value="1"/>
</dbReference>
<dbReference type="PROSITE" id="PS50850">
    <property type="entry name" value="MFS"/>
    <property type="match status" value="1"/>
</dbReference>
<keyword id="KW-0997">Cell inner membrane</keyword>
<keyword id="KW-1003">Cell membrane</keyword>
<keyword id="KW-0472">Membrane</keyword>
<keyword id="KW-0812">Transmembrane</keyword>
<keyword id="KW-1133">Transmembrane helix</keyword>
<keyword id="KW-0813">Transport</keyword>
<accession>A9N5Q9</accession>
<feature type="chain" id="PRO_1000087587" description="Multidrug resistance protein MdtG">
    <location>
        <begin position="1"/>
        <end position="404"/>
    </location>
</feature>
<feature type="transmembrane region" description="Helical" evidence="1">
    <location>
        <begin position="19"/>
        <end position="39"/>
    </location>
</feature>
<feature type="transmembrane region" description="Helical" evidence="1">
    <location>
        <begin position="56"/>
        <end position="76"/>
    </location>
</feature>
<feature type="transmembrane region" description="Helical" evidence="1">
    <location>
        <begin position="90"/>
        <end position="110"/>
    </location>
</feature>
<feature type="transmembrane region" description="Helical" evidence="1">
    <location>
        <begin position="113"/>
        <end position="133"/>
    </location>
</feature>
<feature type="transmembrane region" description="Helical" evidence="1">
    <location>
        <begin position="144"/>
        <end position="164"/>
    </location>
</feature>
<feature type="transmembrane region" description="Helical" evidence="1">
    <location>
        <begin position="171"/>
        <end position="191"/>
    </location>
</feature>
<feature type="transmembrane region" description="Helical" evidence="1">
    <location>
        <begin position="222"/>
        <end position="242"/>
    </location>
</feature>
<feature type="transmembrane region" description="Helical" evidence="1">
    <location>
        <begin position="254"/>
        <end position="274"/>
    </location>
</feature>
<feature type="transmembrane region" description="Helical" evidence="1">
    <location>
        <begin position="288"/>
        <end position="308"/>
    </location>
</feature>
<feature type="transmembrane region" description="Helical" evidence="1">
    <location>
        <begin position="317"/>
        <end position="337"/>
    </location>
</feature>
<feature type="transmembrane region" description="Helical" evidence="1">
    <location>
        <begin position="376"/>
        <end position="396"/>
    </location>
</feature>
<protein>
    <recommendedName>
        <fullName evidence="1">Multidrug resistance protein MdtG</fullName>
    </recommendedName>
</protein>
<evidence type="ECO:0000255" key="1">
    <source>
        <dbReference type="HAMAP-Rule" id="MF_01528"/>
    </source>
</evidence>
<name>MDTG_SALPB</name>
<sequence length="404" mass="43596">MSPSDVPINWKRNLTVTWLGCFLTGAAFSLVMPFLPLYVEQLGVTGHSALNMWSGLVFSITFLFSAIASPFWGGLADRKGRKIMLLRSALGMAIVMLLMGMAQNIWQFLILRALLGLLGGFIPNANALIATQVPRHKSGWALGTLSTGGVSGALLGPLAGGLLADHYGLRPVFFITASVLFICFLLTFFFIRENFLPVSKKEMLHVREVVASLKNPRLVLSLFVTTLIIQVATGSIAPILTLYVRELAGNVSNIAFISGMIASVPGVAALLSAPRLGKLGDRIGPEKILIVALIISVLLLIPMSFVQTPWQLALLRFLLGAADGALLPAVQTLLVYNSTNQIAGRIFSYNQSFRDIGNVTGPLMGAAISASYGFRAVFCVTAGVVLFNAIYSWNSLRRRRLAIE</sequence>